<keyword id="KW-0998">Cell outer membrane</keyword>
<keyword id="KW-0472">Membrane</keyword>
<keyword id="KW-0732">Signal</keyword>
<keyword id="KW-0812">Transmembrane</keyword>
<keyword id="KW-1134">Transmembrane beta strand</keyword>
<name>OPAB_NEIGO</name>
<sequence>ASEGNGRGPYVQADLAYAYEHITHDYPEQTGTKKDKISTVSDYFRNIRTHSIHPRVSVGYDFGGWRIAADYARYRKWNDNKYSVDIKELENKNQNKRDLKTENQENGTFHAVSSLGLSAVYDFKLNGKFKPYIGARVAYGHVRHSIDSTKKTTKFLTSSYGGLNPTVYTEENTQNAHHQSNSIRRVGLGVIAGVGFDITPKLTLDTGYRYHYWGRLENTRFKTHEASLGVRYRF</sequence>
<organism>
    <name type="scientific">Neisseria gonorrhoeae</name>
    <dbReference type="NCBI Taxonomy" id="485"/>
    <lineage>
        <taxon>Bacteria</taxon>
        <taxon>Pseudomonadati</taxon>
        <taxon>Pseudomonadota</taxon>
        <taxon>Betaproteobacteria</taxon>
        <taxon>Neisseriales</taxon>
        <taxon>Neisseriaceae</taxon>
        <taxon>Neisseria</taxon>
    </lineage>
</organism>
<reference key="1">
    <citation type="journal article" date="1993" name="EMBO J.">
        <title>Variable opacity (Opa) outer membrane proteins account for the cell tropisms displayed by Neisseria gonorrhoeae for human leukocytes and epithelial cells.</title>
        <authorList>
            <person name="Kupsch E.-M."/>
            <person name="Knepper B."/>
            <person name="Kuroki T."/>
            <person name="Heuer I."/>
            <person name="Meyer T.F."/>
        </authorList>
    </citation>
    <scope>NUCLEOTIDE SEQUENCE [GENOMIC DNA]</scope>
    <source>
        <strain>MS11 / F3</strain>
    </source>
</reference>
<evidence type="ECO:0000255" key="1"/>
<evidence type="ECO:0000305" key="2"/>
<feature type="signal peptide" evidence="1">
    <location>
        <begin position="1" status="less than"/>
        <end position="1"/>
    </location>
</feature>
<feature type="chain" id="PRO_0000021906" description="Opacity protein opA51">
    <location>
        <begin position="2"/>
        <end position="234" status="greater than"/>
    </location>
</feature>
<feature type="non-terminal residue">
    <location>
        <position position="1"/>
    </location>
</feature>
<feature type="non-terminal residue">
    <location>
        <position position="234"/>
    </location>
</feature>
<proteinExistence type="inferred from homology"/>
<accession>Q04874</accession>
<gene>
    <name type="primary">opaB</name>
</gene>
<comment type="function">
    <text>Implicated in a number of adherence functions. OPA proteins are implicated in pathogenesis and are subject to phase variation.</text>
</comment>
<comment type="subcellular location">
    <subcellularLocation>
        <location>Cell outer membrane</location>
    </subcellularLocation>
</comment>
<comment type="similarity">
    <text evidence="2">Belongs to the opacity porin family.</text>
</comment>
<dbReference type="EMBL" id="Z18928">
    <property type="protein sequence ID" value="CAA79361.1"/>
    <property type="molecule type" value="Genomic_DNA"/>
</dbReference>
<dbReference type="PIR" id="S36329">
    <property type="entry name" value="S36329"/>
</dbReference>
<dbReference type="SMR" id="Q04874"/>
<dbReference type="Reactome" id="R-HSA-202733">
    <property type="pathway name" value="Cell surface interactions at the vascular wall"/>
</dbReference>
<dbReference type="GO" id="GO:0009279">
    <property type="term" value="C:cell outer membrane"/>
    <property type="evidence" value="ECO:0000304"/>
    <property type="project" value="Reactome"/>
</dbReference>
<dbReference type="GO" id="GO:0015288">
    <property type="term" value="F:porin activity"/>
    <property type="evidence" value="ECO:0007669"/>
    <property type="project" value="InterPro"/>
</dbReference>
<dbReference type="FunFam" id="2.40.160.20:FF:000005">
    <property type="entry name" value="Opacity protein opA54"/>
    <property type="match status" value="1"/>
</dbReference>
<dbReference type="Gene3D" id="2.40.160.20">
    <property type="match status" value="1"/>
</dbReference>
<dbReference type="InterPro" id="IPR011250">
    <property type="entry name" value="OMP/PagP_b-brl"/>
</dbReference>
<dbReference type="InterPro" id="IPR003394">
    <property type="entry name" value="Porin_opacity"/>
</dbReference>
<dbReference type="Pfam" id="PF02462">
    <property type="entry name" value="Opacity"/>
    <property type="match status" value="1"/>
</dbReference>
<dbReference type="SUPFAM" id="SSF56925">
    <property type="entry name" value="OMPA-like"/>
    <property type="match status" value="1"/>
</dbReference>
<protein>
    <recommendedName>
        <fullName>Opacity protein opA51</fullName>
    </recommendedName>
</protein>